<name>URE2_RHOJR</name>
<proteinExistence type="inferred from homology"/>
<accession>Q0S4S8</accession>
<reference key="1">
    <citation type="journal article" date="2006" name="Proc. Natl. Acad. Sci. U.S.A.">
        <title>The complete genome of Rhodococcus sp. RHA1 provides insights into a catabolic powerhouse.</title>
        <authorList>
            <person name="McLeod M.P."/>
            <person name="Warren R.L."/>
            <person name="Hsiao W.W.L."/>
            <person name="Araki N."/>
            <person name="Myhre M."/>
            <person name="Fernandes C."/>
            <person name="Miyazawa D."/>
            <person name="Wong W."/>
            <person name="Lillquist A.L."/>
            <person name="Wang D."/>
            <person name="Dosanjh M."/>
            <person name="Hara H."/>
            <person name="Petrescu A."/>
            <person name="Morin R.D."/>
            <person name="Yang G."/>
            <person name="Stott J.M."/>
            <person name="Schein J.E."/>
            <person name="Shin H."/>
            <person name="Smailus D."/>
            <person name="Siddiqui A.S."/>
            <person name="Marra M.A."/>
            <person name="Jones S.J.M."/>
            <person name="Holt R."/>
            <person name="Brinkman F.S.L."/>
            <person name="Miyauchi K."/>
            <person name="Fukuda M."/>
            <person name="Davies J.E."/>
            <person name="Mohn W.W."/>
            <person name="Eltis L.D."/>
        </authorList>
    </citation>
    <scope>NUCLEOTIDE SEQUENCE [LARGE SCALE GENOMIC DNA]</scope>
    <source>
        <strain>RHA1</strain>
    </source>
</reference>
<sequence>MIPGEVVCAEGVIELNEGSPRTELEVVNTGDRPVQVGSHVHFPQSNHALQFDRSAAHGLRLDIPAGTAVRFEPGIAQTISLVPLRGTREVHGLSLTPPGKLDAS</sequence>
<gene>
    <name evidence="1" type="primary">ureB</name>
    <name type="ordered locus">RHA1_ro05679</name>
</gene>
<protein>
    <recommendedName>
        <fullName evidence="1">Urease subunit beta</fullName>
        <ecNumber evidence="1">3.5.1.5</ecNumber>
    </recommendedName>
    <alternativeName>
        <fullName evidence="1">Urea amidohydrolase subunit beta</fullName>
    </alternativeName>
</protein>
<organism>
    <name type="scientific">Rhodococcus jostii (strain RHA1)</name>
    <dbReference type="NCBI Taxonomy" id="101510"/>
    <lineage>
        <taxon>Bacteria</taxon>
        <taxon>Bacillati</taxon>
        <taxon>Actinomycetota</taxon>
        <taxon>Actinomycetes</taxon>
        <taxon>Mycobacteriales</taxon>
        <taxon>Nocardiaceae</taxon>
        <taxon>Rhodococcus</taxon>
    </lineage>
</organism>
<comment type="catalytic activity">
    <reaction evidence="1">
        <text>urea + 2 H2O + H(+) = hydrogencarbonate + 2 NH4(+)</text>
        <dbReference type="Rhea" id="RHEA:20557"/>
        <dbReference type="ChEBI" id="CHEBI:15377"/>
        <dbReference type="ChEBI" id="CHEBI:15378"/>
        <dbReference type="ChEBI" id="CHEBI:16199"/>
        <dbReference type="ChEBI" id="CHEBI:17544"/>
        <dbReference type="ChEBI" id="CHEBI:28938"/>
        <dbReference type="EC" id="3.5.1.5"/>
    </reaction>
</comment>
<comment type="pathway">
    <text evidence="1">Nitrogen metabolism; urea degradation; CO(2) and NH(3) from urea (urease route): step 1/1.</text>
</comment>
<comment type="subunit">
    <text evidence="1">Heterotrimer of UreA (gamma), UreB (beta) and UreC (alpha) subunits. Three heterotrimers associate to form the active enzyme.</text>
</comment>
<comment type="subcellular location">
    <subcellularLocation>
        <location evidence="1">Cytoplasm</location>
    </subcellularLocation>
</comment>
<comment type="similarity">
    <text evidence="1">Belongs to the urease beta subunit family.</text>
</comment>
<dbReference type="EC" id="3.5.1.5" evidence="1"/>
<dbReference type="EMBL" id="CP000431">
    <property type="protein sequence ID" value="ABG97458.1"/>
    <property type="molecule type" value="Genomic_DNA"/>
</dbReference>
<dbReference type="RefSeq" id="WP_011597809.1">
    <property type="nucleotide sequence ID" value="NC_008268.1"/>
</dbReference>
<dbReference type="SMR" id="Q0S4S8"/>
<dbReference type="KEGG" id="rha:RHA1_ro05679"/>
<dbReference type="PATRIC" id="fig|101510.16.peg.5723"/>
<dbReference type="eggNOG" id="COG0832">
    <property type="taxonomic scope" value="Bacteria"/>
</dbReference>
<dbReference type="HOGENOM" id="CLU_129707_1_1_11"/>
<dbReference type="OrthoDB" id="9797217at2"/>
<dbReference type="UniPathway" id="UPA00258">
    <property type="reaction ID" value="UER00370"/>
</dbReference>
<dbReference type="Proteomes" id="UP000008710">
    <property type="component" value="Chromosome"/>
</dbReference>
<dbReference type="GO" id="GO:0035550">
    <property type="term" value="C:urease complex"/>
    <property type="evidence" value="ECO:0007669"/>
    <property type="project" value="InterPro"/>
</dbReference>
<dbReference type="GO" id="GO:0009039">
    <property type="term" value="F:urease activity"/>
    <property type="evidence" value="ECO:0007669"/>
    <property type="project" value="UniProtKB-UniRule"/>
</dbReference>
<dbReference type="GO" id="GO:0043419">
    <property type="term" value="P:urea catabolic process"/>
    <property type="evidence" value="ECO:0007669"/>
    <property type="project" value="UniProtKB-UniRule"/>
</dbReference>
<dbReference type="CDD" id="cd00407">
    <property type="entry name" value="Urease_beta"/>
    <property type="match status" value="1"/>
</dbReference>
<dbReference type="Gene3D" id="2.10.150.10">
    <property type="entry name" value="Urease, beta subunit"/>
    <property type="match status" value="1"/>
</dbReference>
<dbReference type="HAMAP" id="MF_01954">
    <property type="entry name" value="Urease_beta"/>
    <property type="match status" value="1"/>
</dbReference>
<dbReference type="InterPro" id="IPR002019">
    <property type="entry name" value="Urease_beta-like"/>
</dbReference>
<dbReference type="InterPro" id="IPR036461">
    <property type="entry name" value="Urease_betasu_sf"/>
</dbReference>
<dbReference type="InterPro" id="IPR050069">
    <property type="entry name" value="Urease_subunit"/>
</dbReference>
<dbReference type="NCBIfam" id="NF009682">
    <property type="entry name" value="PRK13203.1"/>
    <property type="match status" value="1"/>
</dbReference>
<dbReference type="NCBIfam" id="TIGR00192">
    <property type="entry name" value="urease_beta"/>
    <property type="match status" value="1"/>
</dbReference>
<dbReference type="PANTHER" id="PTHR33569">
    <property type="entry name" value="UREASE"/>
    <property type="match status" value="1"/>
</dbReference>
<dbReference type="PANTHER" id="PTHR33569:SF1">
    <property type="entry name" value="UREASE"/>
    <property type="match status" value="1"/>
</dbReference>
<dbReference type="Pfam" id="PF00699">
    <property type="entry name" value="Urease_beta"/>
    <property type="match status" value="1"/>
</dbReference>
<dbReference type="SUPFAM" id="SSF51278">
    <property type="entry name" value="Urease, beta-subunit"/>
    <property type="match status" value="1"/>
</dbReference>
<evidence type="ECO:0000255" key="1">
    <source>
        <dbReference type="HAMAP-Rule" id="MF_01954"/>
    </source>
</evidence>
<keyword id="KW-0963">Cytoplasm</keyword>
<keyword id="KW-0378">Hydrolase</keyword>
<feature type="chain" id="PRO_1000070771" description="Urease subunit beta">
    <location>
        <begin position="1"/>
        <end position="104"/>
    </location>
</feature>